<keyword id="KW-1185">Reference proteome</keyword>
<keyword id="KW-0687">Ribonucleoprotein</keyword>
<keyword id="KW-0689">Ribosomal protein</keyword>
<sequence>MSKLNKSIVAEFESAQITRELPKFSQGDTVVVNVKVKEGSRERVQAYEGVVIATKNAGLNSSFTVRKISHGYGVERVFQTHSAIIDSVEVKRRGKVRAGKLYYLRGLEGKAARIKEDLAAAAAAKAARLAEKA</sequence>
<name>RL19_STRMK</name>
<dbReference type="EMBL" id="AM743169">
    <property type="protein sequence ID" value="CAQ44922.1"/>
    <property type="molecule type" value="Genomic_DNA"/>
</dbReference>
<dbReference type="RefSeq" id="WP_005408597.1">
    <property type="nucleotide sequence ID" value="NC_010943.1"/>
</dbReference>
<dbReference type="SMR" id="B2FUB6"/>
<dbReference type="EnsemblBacteria" id="CAQ44922">
    <property type="protein sequence ID" value="CAQ44922"/>
    <property type="gene ID" value="Smlt1377"/>
</dbReference>
<dbReference type="GeneID" id="93832482"/>
<dbReference type="KEGG" id="sml:Smlt1377"/>
<dbReference type="eggNOG" id="COG0335">
    <property type="taxonomic scope" value="Bacteria"/>
</dbReference>
<dbReference type="HOGENOM" id="CLU_103507_2_1_6"/>
<dbReference type="Proteomes" id="UP000008840">
    <property type="component" value="Chromosome"/>
</dbReference>
<dbReference type="GO" id="GO:0022625">
    <property type="term" value="C:cytosolic large ribosomal subunit"/>
    <property type="evidence" value="ECO:0007669"/>
    <property type="project" value="TreeGrafter"/>
</dbReference>
<dbReference type="GO" id="GO:0003735">
    <property type="term" value="F:structural constituent of ribosome"/>
    <property type="evidence" value="ECO:0007669"/>
    <property type="project" value="InterPro"/>
</dbReference>
<dbReference type="GO" id="GO:0006412">
    <property type="term" value="P:translation"/>
    <property type="evidence" value="ECO:0007669"/>
    <property type="project" value="UniProtKB-UniRule"/>
</dbReference>
<dbReference type="FunFam" id="2.30.30.790:FF:000001">
    <property type="entry name" value="50S ribosomal protein L19"/>
    <property type="match status" value="1"/>
</dbReference>
<dbReference type="Gene3D" id="2.30.30.790">
    <property type="match status" value="1"/>
</dbReference>
<dbReference type="HAMAP" id="MF_00402">
    <property type="entry name" value="Ribosomal_bL19"/>
    <property type="match status" value="1"/>
</dbReference>
<dbReference type="InterPro" id="IPR001857">
    <property type="entry name" value="Ribosomal_bL19"/>
</dbReference>
<dbReference type="InterPro" id="IPR018257">
    <property type="entry name" value="Ribosomal_bL19_CS"/>
</dbReference>
<dbReference type="InterPro" id="IPR038657">
    <property type="entry name" value="Ribosomal_bL19_sf"/>
</dbReference>
<dbReference type="InterPro" id="IPR008991">
    <property type="entry name" value="Translation_prot_SH3-like_sf"/>
</dbReference>
<dbReference type="NCBIfam" id="TIGR01024">
    <property type="entry name" value="rplS_bact"/>
    <property type="match status" value="1"/>
</dbReference>
<dbReference type="PANTHER" id="PTHR15680:SF9">
    <property type="entry name" value="LARGE RIBOSOMAL SUBUNIT PROTEIN BL19M"/>
    <property type="match status" value="1"/>
</dbReference>
<dbReference type="PANTHER" id="PTHR15680">
    <property type="entry name" value="RIBOSOMAL PROTEIN L19"/>
    <property type="match status" value="1"/>
</dbReference>
<dbReference type="Pfam" id="PF01245">
    <property type="entry name" value="Ribosomal_L19"/>
    <property type="match status" value="1"/>
</dbReference>
<dbReference type="PIRSF" id="PIRSF002191">
    <property type="entry name" value="Ribosomal_L19"/>
    <property type="match status" value="1"/>
</dbReference>
<dbReference type="PRINTS" id="PR00061">
    <property type="entry name" value="RIBOSOMALL19"/>
</dbReference>
<dbReference type="SUPFAM" id="SSF50104">
    <property type="entry name" value="Translation proteins SH3-like domain"/>
    <property type="match status" value="1"/>
</dbReference>
<dbReference type="PROSITE" id="PS01015">
    <property type="entry name" value="RIBOSOMAL_L19"/>
    <property type="match status" value="1"/>
</dbReference>
<evidence type="ECO:0000255" key="1">
    <source>
        <dbReference type="HAMAP-Rule" id="MF_00402"/>
    </source>
</evidence>
<evidence type="ECO:0000305" key="2"/>
<protein>
    <recommendedName>
        <fullName evidence="1">Large ribosomal subunit protein bL19</fullName>
    </recommendedName>
    <alternativeName>
        <fullName evidence="2">50S ribosomal protein L19</fullName>
    </alternativeName>
</protein>
<gene>
    <name evidence="1" type="primary">rplS</name>
    <name type="ordered locus">Smlt1377</name>
</gene>
<reference key="1">
    <citation type="journal article" date="2008" name="Genome Biol.">
        <title>The complete genome, comparative and functional analysis of Stenotrophomonas maltophilia reveals an organism heavily shielded by drug resistance determinants.</title>
        <authorList>
            <person name="Crossman L.C."/>
            <person name="Gould V.C."/>
            <person name="Dow J.M."/>
            <person name="Vernikos G.S."/>
            <person name="Okazaki A."/>
            <person name="Sebaihia M."/>
            <person name="Saunders D."/>
            <person name="Arrowsmith C."/>
            <person name="Carver T."/>
            <person name="Peters N."/>
            <person name="Adlem E."/>
            <person name="Kerhornou A."/>
            <person name="Lord A."/>
            <person name="Murphy L."/>
            <person name="Seeger K."/>
            <person name="Squares R."/>
            <person name="Rutter S."/>
            <person name="Quail M.A."/>
            <person name="Rajandream M.A."/>
            <person name="Harris D."/>
            <person name="Churcher C."/>
            <person name="Bentley S.D."/>
            <person name="Parkhill J."/>
            <person name="Thomson N.R."/>
            <person name="Avison M.B."/>
        </authorList>
    </citation>
    <scope>NUCLEOTIDE SEQUENCE [LARGE SCALE GENOMIC DNA]</scope>
    <source>
        <strain>K279a</strain>
    </source>
</reference>
<accession>B2FUB6</accession>
<proteinExistence type="inferred from homology"/>
<organism>
    <name type="scientific">Stenotrophomonas maltophilia (strain K279a)</name>
    <dbReference type="NCBI Taxonomy" id="522373"/>
    <lineage>
        <taxon>Bacteria</taxon>
        <taxon>Pseudomonadati</taxon>
        <taxon>Pseudomonadota</taxon>
        <taxon>Gammaproteobacteria</taxon>
        <taxon>Lysobacterales</taxon>
        <taxon>Lysobacteraceae</taxon>
        <taxon>Stenotrophomonas</taxon>
        <taxon>Stenotrophomonas maltophilia group</taxon>
    </lineage>
</organism>
<comment type="function">
    <text evidence="1">This protein is located at the 30S-50S ribosomal subunit interface and may play a role in the structure and function of the aminoacyl-tRNA binding site.</text>
</comment>
<comment type="similarity">
    <text evidence="1">Belongs to the bacterial ribosomal protein bL19 family.</text>
</comment>
<feature type="chain" id="PRO_1000193889" description="Large ribosomal subunit protein bL19">
    <location>
        <begin position="1"/>
        <end position="133"/>
    </location>
</feature>